<protein>
    <recommendedName>
        <fullName evidence="1">Adenine deaminase 2</fullName>
        <shortName evidence="1">Adenase 2</shortName>
        <shortName evidence="1">Adenine aminase 2</shortName>
        <ecNumber evidence="1">3.5.4.2</ecNumber>
    </recommendedName>
</protein>
<dbReference type="EC" id="3.5.4.2" evidence="1"/>
<dbReference type="EMBL" id="AL591985">
    <property type="protein sequence ID" value="CAC49182.1"/>
    <property type="molecule type" value="Genomic_DNA"/>
</dbReference>
<dbReference type="PIR" id="F95939">
    <property type="entry name" value="F95939"/>
</dbReference>
<dbReference type="RefSeq" id="NP_437322.1">
    <property type="nucleotide sequence ID" value="NC_003078.1"/>
</dbReference>
<dbReference type="RefSeq" id="WP_010975638.1">
    <property type="nucleotide sequence ID" value="NC_003078.1"/>
</dbReference>
<dbReference type="SMR" id="Q92VC6"/>
<dbReference type="EnsemblBacteria" id="CAC49182">
    <property type="protein sequence ID" value="CAC49182"/>
    <property type="gene ID" value="SM_b21278"/>
</dbReference>
<dbReference type="KEGG" id="sme:SM_b21278"/>
<dbReference type="PATRIC" id="fig|266834.11.peg.5711"/>
<dbReference type="eggNOG" id="COG1001">
    <property type="taxonomic scope" value="Bacteria"/>
</dbReference>
<dbReference type="HOGENOM" id="CLU_027935_0_0_5"/>
<dbReference type="OrthoDB" id="9775607at2"/>
<dbReference type="Proteomes" id="UP000001976">
    <property type="component" value="Plasmid pSymB"/>
</dbReference>
<dbReference type="GO" id="GO:0000034">
    <property type="term" value="F:adenine deaminase activity"/>
    <property type="evidence" value="ECO:0007669"/>
    <property type="project" value="UniProtKB-UniRule"/>
</dbReference>
<dbReference type="GO" id="GO:0006146">
    <property type="term" value="P:adenine catabolic process"/>
    <property type="evidence" value="ECO:0007669"/>
    <property type="project" value="InterPro"/>
</dbReference>
<dbReference type="CDD" id="cd01295">
    <property type="entry name" value="AdeC"/>
    <property type="match status" value="1"/>
</dbReference>
<dbReference type="Gene3D" id="3.20.20.140">
    <property type="entry name" value="Metal-dependent hydrolases"/>
    <property type="match status" value="1"/>
</dbReference>
<dbReference type="Gene3D" id="2.30.40.10">
    <property type="entry name" value="Urease, subunit C, domain 1"/>
    <property type="match status" value="1"/>
</dbReference>
<dbReference type="HAMAP" id="MF_01518">
    <property type="entry name" value="Adenine_deamin"/>
    <property type="match status" value="1"/>
</dbReference>
<dbReference type="InterPro" id="IPR006679">
    <property type="entry name" value="Adenine_deam"/>
</dbReference>
<dbReference type="InterPro" id="IPR026912">
    <property type="entry name" value="Adenine_deam_C"/>
</dbReference>
<dbReference type="InterPro" id="IPR006680">
    <property type="entry name" value="Amidohydro-rel"/>
</dbReference>
<dbReference type="InterPro" id="IPR011059">
    <property type="entry name" value="Metal-dep_hydrolase_composite"/>
</dbReference>
<dbReference type="InterPro" id="IPR032466">
    <property type="entry name" value="Metal_Hydrolase"/>
</dbReference>
<dbReference type="PANTHER" id="PTHR11113:SF2">
    <property type="entry name" value="ADENINE DEAMINASE"/>
    <property type="match status" value="1"/>
</dbReference>
<dbReference type="PANTHER" id="PTHR11113">
    <property type="entry name" value="N-ACETYLGLUCOSAMINE-6-PHOSPHATE DEACETYLASE"/>
    <property type="match status" value="1"/>
</dbReference>
<dbReference type="Pfam" id="PF13382">
    <property type="entry name" value="Adenine_deam_C"/>
    <property type="match status" value="1"/>
</dbReference>
<dbReference type="Pfam" id="PF01979">
    <property type="entry name" value="Amidohydro_1"/>
    <property type="match status" value="1"/>
</dbReference>
<dbReference type="SUPFAM" id="SSF51338">
    <property type="entry name" value="Composite domain of metallo-dependent hydrolases"/>
    <property type="match status" value="1"/>
</dbReference>
<dbReference type="SUPFAM" id="SSF51556">
    <property type="entry name" value="Metallo-dependent hydrolases"/>
    <property type="match status" value="1"/>
</dbReference>
<keyword id="KW-0378">Hydrolase</keyword>
<keyword id="KW-0464">Manganese</keyword>
<keyword id="KW-0614">Plasmid</keyword>
<keyword id="KW-1185">Reference proteome</keyword>
<comment type="catalytic activity">
    <reaction evidence="1">
        <text>adenine + H2O + H(+) = hypoxanthine + NH4(+)</text>
        <dbReference type="Rhea" id="RHEA:23688"/>
        <dbReference type="ChEBI" id="CHEBI:15377"/>
        <dbReference type="ChEBI" id="CHEBI:15378"/>
        <dbReference type="ChEBI" id="CHEBI:16708"/>
        <dbReference type="ChEBI" id="CHEBI:17368"/>
        <dbReference type="ChEBI" id="CHEBI:28938"/>
        <dbReference type="EC" id="3.5.4.2"/>
    </reaction>
</comment>
<comment type="cofactor">
    <cofactor evidence="1">
        <name>Mn(2+)</name>
        <dbReference type="ChEBI" id="CHEBI:29035"/>
    </cofactor>
</comment>
<comment type="similarity">
    <text evidence="1">Belongs to the metallo-dependent hydrolases superfamily. Adenine deaminase family.</text>
</comment>
<sequence>MTVLQQPADLDDACLRARAVAAARGDARFDVLVAGGTVVDVVTGECRAADVGIVGALIASVHAPGSRSDADTVIDAAGAYISPGLIDTHMHVESSMVTPAVYAAAVVPRGVTTVVWDPHEFGNVSGLAGVRWAVDAMGGLPLRAVVLAPSCVPSAPGLEVAGADFDADAVAEMLSWPEIGGIAEVMNMRGVIDGDPRMTAIVEAGLKAGKPVNGHARGLEGADLQAFVTAGVSSDHELVSGDDLIAKLRAGLSIELRGSHDHLLPEFVIALGTLGHLPQTVTLCTDDVFPDDLHRDGGLDDVVRRLVRYGLKAEWALQAATLNAARRLGRADLGLIAPGRRADIVLFEDIRDFRALHVLANGRLVASGGGMLQAPVAAGVSPLRHTMKIEPLTEDDFRIAATGSTARVVTIDRPRFTRWGETRAEVSGGYLVPPKGMTLIAVAHRHGRADSRPRVGLLEGWGEWRGAFATTVSHDSHNLTVFGSSPRDMRVAANAVIEAGGGMAVVAEGKVEALLPLPLCGLVSDAPLAEVAAGFAAIREAAGRIVEWQPPYLVFKACFGATLACNAGPHQTDRGIADVATGKLLESPVLETF</sequence>
<reference key="1">
    <citation type="journal article" date="2001" name="Proc. Natl. Acad. Sci. U.S.A.">
        <title>The complete sequence of the 1,683-kb pSymB megaplasmid from the N2-fixing endosymbiont Sinorhizobium meliloti.</title>
        <authorList>
            <person name="Finan T.M."/>
            <person name="Weidner S."/>
            <person name="Wong K."/>
            <person name="Buhrmester J."/>
            <person name="Chain P."/>
            <person name="Vorhoelter F.J."/>
            <person name="Hernandez-Lucas I."/>
            <person name="Becker A."/>
            <person name="Cowie A."/>
            <person name="Gouzy J."/>
            <person name="Golding B."/>
            <person name="Puehler A."/>
        </authorList>
    </citation>
    <scope>NUCLEOTIDE SEQUENCE [LARGE SCALE GENOMIC DNA]</scope>
    <source>
        <strain>1021</strain>
    </source>
</reference>
<reference key="2">
    <citation type="journal article" date="2001" name="Science">
        <title>The composite genome of the legume symbiont Sinorhizobium meliloti.</title>
        <authorList>
            <person name="Galibert F."/>
            <person name="Finan T.M."/>
            <person name="Long S.R."/>
            <person name="Puehler A."/>
            <person name="Abola P."/>
            <person name="Ampe F."/>
            <person name="Barloy-Hubler F."/>
            <person name="Barnett M.J."/>
            <person name="Becker A."/>
            <person name="Boistard P."/>
            <person name="Bothe G."/>
            <person name="Boutry M."/>
            <person name="Bowser L."/>
            <person name="Buhrmester J."/>
            <person name="Cadieu E."/>
            <person name="Capela D."/>
            <person name="Chain P."/>
            <person name="Cowie A."/>
            <person name="Davis R.W."/>
            <person name="Dreano S."/>
            <person name="Federspiel N.A."/>
            <person name="Fisher R.F."/>
            <person name="Gloux S."/>
            <person name="Godrie T."/>
            <person name="Goffeau A."/>
            <person name="Golding B."/>
            <person name="Gouzy J."/>
            <person name="Gurjal M."/>
            <person name="Hernandez-Lucas I."/>
            <person name="Hong A."/>
            <person name="Huizar L."/>
            <person name="Hyman R.W."/>
            <person name="Jones T."/>
            <person name="Kahn D."/>
            <person name="Kahn M.L."/>
            <person name="Kalman S."/>
            <person name="Keating D.H."/>
            <person name="Kiss E."/>
            <person name="Komp C."/>
            <person name="Lelaure V."/>
            <person name="Masuy D."/>
            <person name="Palm C."/>
            <person name="Peck M.C."/>
            <person name="Pohl T.M."/>
            <person name="Portetelle D."/>
            <person name="Purnelle B."/>
            <person name="Ramsperger U."/>
            <person name="Surzycki R."/>
            <person name="Thebault P."/>
            <person name="Vandenbol M."/>
            <person name="Vorhoelter F.J."/>
            <person name="Weidner S."/>
            <person name="Wells D.H."/>
            <person name="Wong K."/>
            <person name="Yeh K.-C."/>
            <person name="Batut J."/>
        </authorList>
    </citation>
    <scope>NUCLEOTIDE SEQUENCE [LARGE SCALE GENOMIC DNA]</scope>
    <source>
        <strain>1021</strain>
    </source>
</reference>
<evidence type="ECO:0000255" key="1">
    <source>
        <dbReference type="HAMAP-Rule" id="MF_01518"/>
    </source>
</evidence>
<organism>
    <name type="scientific">Rhizobium meliloti (strain 1021)</name>
    <name type="common">Ensifer meliloti</name>
    <name type="synonym">Sinorhizobium meliloti</name>
    <dbReference type="NCBI Taxonomy" id="266834"/>
    <lineage>
        <taxon>Bacteria</taxon>
        <taxon>Pseudomonadati</taxon>
        <taxon>Pseudomonadota</taxon>
        <taxon>Alphaproteobacteria</taxon>
        <taxon>Hyphomicrobiales</taxon>
        <taxon>Rhizobiaceae</taxon>
        <taxon>Sinorhizobium/Ensifer group</taxon>
        <taxon>Sinorhizobium</taxon>
    </lineage>
</organism>
<proteinExistence type="inferred from homology"/>
<gene>
    <name evidence="1" type="primary">ade2</name>
    <name type="synonym">adeC2</name>
    <name type="ordered locus">RB0782</name>
    <name type="ORF">SMb21278</name>
</gene>
<feature type="chain" id="PRO_0000142433" description="Adenine deaminase 2">
    <location>
        <begin position="1"/>
        <end position="593"/>
    </location>
</feature>
<name>ADEC2_RHIME</name>
<accession>Q92VC6</accession>
<geneLocation type="plasmid">
    <name>pSymB</name>
    <name>megaplasmid 2</name>
</geneLocation>